<accession>B3A0M3</accession>
<name>BR2_ODOJI</name>
<keyword id="KW-0878">Amphibian defense peptide</keyword>
<keyword id="KW-0044">Antibiotic</keyword>
<keyword id="KW-0929">Antimicrobial</keyword>
<keyword id="KW-0204">Cytolysis</keyword>
<keyword id="KW-0903">Direct protein sequencing</keyword>
<keyword id="KW-1015">Disulfide bond</keyword>
<keyword id="KW-0295">Fungicide</keyword>
<keyword id="KW-0354">Hemolysis</keyword>
<keyword id="KW-0964">Secreted</keyword>
<sequence>GLLDTFKNLALNAAKSAGVSVLNSLSCKLSKTC</sequence>
<comment type="function">
    <text evidence="2">Has antibacterial activity against E.coli ATCC 25992 (MIC=38 uM), E.coli CIB 84492 (MIC=38 uM), S.aureus ATCC 25923 (MIC=19 uM) and S.aureus CIB 85462 (MIC=19 uM). Has antifungal activity against C.albicans (MIC=19 uM). Has weak hemolytic activity against rabbit erythrocytes.</text>
</comment>
<comment type="subcellular location">
    <subcellularLocation>
        <location evidence="5">Secreted</location>
    </subcellularLocation>
</comment>
<comment type="tissue specificity">
    <text evidence="5">Expressed by the skin glands.</text>
</comment>
<comment type="mass spectrometry"/>
<comment type="similarity">
    <text evidence="1">Belongs to the frog skin active peptide (FSAP) family. Brevinin subfamily.</text>
</comment>
<feature type="peptide" id="PRO_0000420135" description="Brevinin-2JD" evidence="2">
    <location>
        <begin position="1"/>
        <end position="33"/>
    </location>
</feature>
<feature type="disulfide bond" evidence="2">
    <location>
        <begin position="27"/>
        <end position="33"/>
    </location>
</feature>
<feature type="unsure residue" description="L or I" evidence="2">
    <location>
        <position position="9"/>
    </location>
</feature>
<feature type="unsure residue" description="L or I" evidence="2">
    <location>
        <position position="11"/>
    </location>
</feature>
<feature type="unsure residue" description="L or I" evidence="2">
    <location>
        <position position="22"/>
    </location>
</feature>
<feature type="unsure residue" description="L or I" evidence="2">
    <location>
        <position position="25"/>
    </location>
</feature>
<feature type="unsure residue" description="L or I" evidence="2">
    <location>
        <position position="29"/>
    </location>
</feature>
<dbReference type="SMR" id="B3A0M3"/>
<dbReference type="GO" id="GO:0005576">
    <property type="term" value="C:extracellular region"/>
    <property type="evidence" value="ECO:0007669"/>
    <property type="project" value="UniProtKB-SubCell"/>
</dbReference>
<dbReference type="GO" id="GO:0050832">
    <property type="term" value="P:defense response to fungus"/>
    <property type="evidence" value="ECO:0000314"/>
    <property type="project" value="UniProtKB"/>
</dbReference>
<dbReference type="GO" id="GO:0050829">
    <property type="term" value="P:defense response to Gram-negative bacterium"/>
    <property type="evidence" value="ECO:0000314"/>
    <property type="project" value="UniProtKB"/>
</dbReference>
<dbReference type="GO" id="GO:0050830">
    <property type="term" value="P:defense response to Gram-positive bacterium"/>
    <property type="evidence" value="ECO:0000314"/>
    <property type="project" value="UniProtKB"/>
</dbReference>
<dbReference type="GO" id="GO:0044179">
    <property type="term" value="P:hemolysis in another organism"/>
    <property type="evidence" value="ECO:0000314"/>
    <property type="project" value="UniProtKB"/>
</dbReference>
<dbReference type="InterPro" id="IPR012521">
    <property type="entry name" value="Antimicrobial_frog_2"/>
</dbReference>
<dbReference type="Pfam" id="PF08023">
    <property type="entry name" value="Antimicrobial_2"/>
    <property type="match status" value="1"/>
</dbReference>
<protein>
    <recommendedName>
        <fullName evidence="3">Brevinin-2JD</fullName>
    </recommendedName>
</protein>
<proteinExistence type="evidence at protein level"/>
<evidence type="ECO:0000255" key="1"/>
<evidence type="ECO:0000269" key="2">
    <source>
    </source>
</evidence>
<evidence type="ECO:0000303" key="3">
    <source>
    </source>
</evidence>
<evidence type="ECO:0000305" key="4"/>
<evidence type="ECO:0000305" key="5">
    <source>
    </source>
</evidence>
<organism>
    <name type="scientific">Odorrana jingdongensis</name>
    <name type="common">Jingdong frog</name>
    <name type="synonym">Rana jingdongensis</name>
    <dbReference type="NCBI Taxonomy" id="431936"/>
    <lineage>
        <taxon>Eukaryota</taxon>
        <taxon>Metazoa</taxon>
        <taxon>Chordata</taxon>
        <taxon>Craniata</taxon>
        <taxon>Vertebrata</taxon>
        <taxon>Euteleostomi</taxon>
        <taxon>Amphibia</taxon>
        <taxon>Batrachia</taxon>
        <taxon>Anura</taxon>
        <taxon>Neobatrachia</taxon>
        <taxon>Ranoidea</taxon>
        <taxon>Ranidae</taxon>
        <taxon>Odorrana</taxon>
    </lineage>
</organism>
<reference evidence="4" key="1">
    <citation type="journal article" date="2012" name="J. Proteomics">
        <title>Antimicrobial peptides from the skin of the Asian frog, Odorrana jingdongensis: De novo sequencing and analysis of tandem mass spectrometry data.</title>
        <authorList>
            <person name="Liu J."/>
            <person name="Jiang J."/>
            <person name="Wu Z."/>
            <person name="Xie F."/>
        </authorList>
    </citation>
    <scope>PROTEIN SEQUENCE</scope>
    <scope>FUNCTION</scope>
    <scope>SUBCELLULAR LOCATION</scope>
    <scope>MASS SPECTROMETRY</scope>
    <source>
        <tissue evidence="2">Skin secretion</tissue>
    </source>
</reference>